<keyword id="KW-1015">Disulfide bond</keyword>
<keyword id="KW-0378">Hydrolase</keyword>
<keyword id="KW-1185">Reference proteome</keyword>
<keyword id="KW-0964">Secreted</keyword>
<keyword id="KW-0719">Serine esterase</keyword>
<keyword id="KW-0732">Signal</keyword>
<comment type="function">
    <text evidence="3">Shows esterase activity, with a preference for short- and medium-chain fatty acids.</text>
</comment>
<comment type="catalytic activity">
    <reaction evidence="3">
        <text>a fatty acid ester + H2O = an aliphatic alcohol + a fatty acid + H(+)</text>
        <dbReference type="Rhea" id="RHEA:59388"/>
        <dbReference type="ChEBI" id="CHEBI:2571"/>
        <dbReference type="ChEBI" id="CHEBI:15377"/>
        <dbReference type="ChEBI" id="CHEBI:15378"/>
        <dbReference type="ChEBI" id="CHEBI:28868"/>
        <dbReference type="ChEBI" id="CHEBI:35748"/>
    </reaction>
    <physiologicalReaction direction="left-to-right" evidence="3">
        <dbReference type="Rhea" id="RHEA:59389"/>
    </physiologicalReaction>
</comment>
<comment type="subcellular location">
    <subcellularLocation>
        <location evidence="3">Secreted</location>
    </subcellularLocation>
</comment>
<comment type="similarity">
    <text evidence="5">Belongs to the cutinase family.</text>
</comment>
<feature type="signal peptide" evidence="4">
    <location>
        <begin position="1"/>
        <end position="32"/>
    </location>
</feature>
<feature type="chain" id="PRO_0000006446" description="Carboxylesterase Culp1">
    <location>
        <begin position="33"/>
        <end position="217"/>
    </location>
</feature>
<feature type="active site" description="Nucleophile" evidence="3">
    <location>
        <position position="118"/>
    </location>
</feature>
<feature type="active site" evidence="3">
    <location>
        <position position="181"/>
    </location>
</feature>
<feature type="active site" description="Proton donor/acceptor" evidence="3">
    <location>
        <position position="193"/>
    </location>
</feature>
<feature type="site" description="Transition state stabilizer" evidence="2">
    <location>
        <position position="119"/>
    </location>
</feature>
<feature type="disulfide bond" evidence="1">
    <location>
        <begin position="35"/>
        <end position="107"/>
    </location>
</feature>
<feature type="disulfide bond" evidence="1">
    <location>
        <begin position="177"/>
        <end position="184"/>
    </location>
</feature>
<gene>
    <name type="ordered locus">BQ2027_MB2006C</name>
</gene>
<protein>
    <recommendedName>
        <fullName evidence="3">Carboxylesterase Culp1</fullName>
        <ecNumber evidence="3">3.1.1.-</ecNumber>
    </recommendedName>
    <alternativeName>
        <fullName evidence="3">Cutinase-like protein 1</fullName>
        <shortName evidence="3">Culp1</shortName>
    </alternativeName>
</protein>
<reference key="1">
    <citation type="journal article" date="2003" name="Proc. Natl. Acad. Sci. U.S.A.">
        <title>The complete genome sequence of Mycobacterium bovis.</title>
        <authorList>
            <person name="Garnier T."/>
            <person name="Eiglmeier K."/>
            <person name="Camus J.-C."/>
            <person name="Medina N."/>
            <person name="Mansoor H."/>
            <person name="Pryor M."/>
            <person name="Duthoy S."/>
            <person name="Grondin S."/>
            <person name="Lacroix C."/>
            <person name="Monsempe C."/>
            <person name="Simon S."/>
            <person name="Harris B."/>
            <person name="Atkin R."/>
            <person name="Doggett J."/>
            <person name="Mayes R."/>
            <person name="Keating L."/>
            <person name="Wheeler P.R."/>
            <person name="Parkhill J."/>
            <person name="Barrell B.G."/>
            <person name="Cole S.T."/>
            <person name="Gordon S.V."/>
            <person name="Hewinson R.G."/>
        </authorList>
    </citation>
    <scope>NUCLEOTIDE SEQUENCE [LARGE SCALE GENOMIC DNA]</scope>
    <source>
        <strain>ATCC BAA-935 / AF2122/97</strain>
    </source>
</reference>
<reference key="2">
    <citation type="journal article" date="2017" name="Genome Announc.">
        <title>Updated reference genome sequence and annotation of Mycobacterium bovis AF2122/97.</title>
        <authorList>
            <person name="Malone K.M."/>
            <person name="Farrell D."/>
            <person name="Stuber T.P."/>
            <person name="Schubert O.T."/>
            <person name="Aebersold R."/>
            <person name="Robbe-Austerman S."/>
            <person name="Gordon S.V."/>
        </authorList>
    </citation>
    <scope>NUCLEOTIDE SEQUENCE [LARGE SCALE GENOMIC DNA]</scope>
    <scope>GENOME REANNOTATION</scope>
    <source>
        <strain>ATCC BAA-935 / AF2122/97</strain>
    </source>
</reference>
<sequence>MTPRSLVRIVGVVVATTLALVSAPAGGRAAHADPCSDIAVVFARGTHQASGLGDVGEAFVDSLTSQVGGRSIGVYAVNYPASDDYRASASNGSDDASAHIQRTVASCPNTRIVLGGYSQGATVIDLSTSAMPPAVADHVAAVALFGEPSSGFSSMLWGGGSLPTIGPLYSSKTINLCAPDDPICTGGGNIMAHVSYVQSGMTSQAATFAANRLDHAG</sequence>
<name>CULP1_MYCBO</name>
<proteinExistence type="inferred from homology"/>
<dbReference type="EC" id="3.1.1.-" evidence="3"/>
<dbReference type="EMBL" id="LT708304">
    <property type="protein sequence ID" value="SIU00612.1"/>
    <property type="molecule type" value="Genomic_DNA"/>
</dbReference>
<dbReference type="RefSeq" id="NP_855656.1">
    <property type="nucleotide sequence ID" value="NC_002945.3"/>
</dbReference>
<dbReference type="SMR" id="P63880"/>
<dbReference type="ESTHER" id="myctu-cutas1">
    <property type="family name" value="Cutinase"/>
</dbReference>
<dbReference type="KEGG" id="mbo:BQ2027_MB2006C"/>
<dbReference type="PATRIC" id="fig|233413.5.peg.2203"/>
<dbReference type="Proteomes" id="UP000001419">
    <property type="component" value="Chromosome"/>
</dbReference>
<dbReference type="GO" id="GO:0005576">
    <property type="term" value="C:extracellular region"/>
    <property type="evidence" value="ECO:0007669"/>
    <property type="project" value="UniProtKB-SubCell"/>
</dbReference>
<dbReference type="GO" id="GO:0052689">
    <property type="term" value="F:carboxylic ester hydrolase activity"/>
    <property type="evidence" value="ECO:0007669"/>
    <property type="project" value="UniProtKB-KW"/>
</dbReference>
<dbReference type="Gene3D" id="3.40.50.1820">
    <property type="entry name" value="alpha/beta hydrolase"/>
    <property type="match status" value="1"/>
</dbReference>
<dbReference type="InterPro" id="IPR029058">
    <property type="entry name" value="AB_hydrolase_fold"/>
</dbReference>
<dbReference type="InterPro" id="IPR000675">
    <property type="entry name" value="Cutinase/axe"/>
</dbReference>
<dbReference type="InterPro" id="IPR043580">
    <property type="entry name" value="CUTINASE_1"/>
</dbReference>
<dbReference type="InterPro" id="IPR043579">
    <property type="entry name" value="CUTINASE_2"/>
</dbReference>
<dbReference type="PANTHER" id="PTHR33630:SF9">
    <property type="entry name" value="CUTINASE 4"/>
    <property type="match status" value="1"/>
</dbReference>
<dbReference type="PANTHER" id="PTHR33630">
    <property type="entry name" value="CUTINASE RV1984C-RELATED-RELATED"/>
    <property type="match status" value="1"/>
</dbReference>
<dbReference type="Pfam" id="PF01083">
    <property type="entry name" value="Cutinase"/>
    <property type="match status" value="1"/>
</dbReference>
<dbReference type="SMART" id="SM01110">
    <property type="entry name" value="Cutinase"/>
    <property type="match status" value="1"/>
</dbReference>
<dbReference type="SUPFAM" id="SSF53474">
    <property type="entry name" value="alpha/beta-Hydrolases"/>
    <property type="match status" value="1"/>
</dbReference>
<dbReference type="PROSITE" id="PS00155">
    <property type="entry name" value="CUTINASE_1"/>
    <property type="match status" value="1"/>
</dbReference>
<dbReference type="PROSITE" id="PS00931">
    <property type="entry name" value="CUTINASE_2"/>
    <property type="match status" value="1"/>
</dbReference>
<accession>P63880</accession>
<accession>A0A1R3XZY4</accession>
<accession>Q10837</accession>
<accession>X2BJ73</accession>
<organism>
    <name type="scientific">Mycobacterium bovis (strain ATCC BAA-935 / AF2122/97)</name>
    <dbReference type="NCBI Taxonomy" id="233413"/>
    <lineage>
        <taxon>Bacteria</taxon>
        <taxon>Bacillati</taxon>
        <taxon>Actinomycetota</taxon>
        <taxon>Actinomycetes</taxon>
        <taxon>Mycobacteriales</taxon>
        <taxon>Mycobacteriaceae</taxon>
        <taxon>Mycobacterium</taxon>
        <taxon>Mycobacterium tuberculosis complex</taxon>
    </lineage>
</organism>
<evidence type="ECO:0000250" key="1">
    <source>
        <dbReference type="UniProtKB" id="O53581"/>
    </source>
</evidence>
<evidence type="ECO:0000250" key="2">
    <source>
        <dbReference type="UniProtKB" id="P00590"/>
    </source>
</evidence>
<evidence type="ECO:0000250" key="3">
    <source>
        <dbReference type="UniProtKB" id="P9WP43"/>
    </source>
</evidence>
<evidence type="ECO:0000255" key="4"/>
<evidence type="ECO:0000305" key="5"/>